<evidence type="ECO:0000255" key="1">
    <source>
        <dbReference type="PROSITE-ProRule" id="PRU00283"/>
    </source>
</evidence>
<evidence type="ECO:0000256" key="2">
    <source>
        <dbReference type="SAM" id="MobiDB-lite"/>
    </source>
</evidence>
<evidence type="ECO:0000303" key="3">
    <source>
    </source>
</evidence>
<evidence type="ECO:0000305" key="4"/>
<evidence type="ECO:0000312" key="5">
    <source>
        <dbReference type="Araport" id="AT1G20060"/>
    </source>
</evidence>
<evidence type="ECO:0000312" key="6">
    <source>
        <dbReference type="EMBL" id="AAF79908.1"/>
    </source>
</evidence>
<sequence length="971" mass="108253">MEEKQKSLSPPPCPSTVTVRRNPPRRARATPFTTTTKPPLSSLACAKPHDVPTFPIDEILSIQIPQSEPKPAIAESLKIFLRIKPLRTFTKVTTTTKSRPRNVWPQNPSKKNNAKENRNPEITKKVRKKDEEACITLNDSYSVTLTPPQSLQELKRSKTEVYEGFSHVFPADCSQNDVYDKMVQPLLEDFMKGKSGMLAALGPSGSGKTHTVFGSLKDPGIVPITLRQIFKKNDESCSGSLRSFNLSIFEICSERGKGEKAYDLLGGESSELSVQQSTIRGLKEVPIQNLEEAESLIGQAMLKRATATTNSNSQSSRSQCIINIRASCNGFSNETKLQSSDAMLTIVDLAGAEREKRTGNQAIDFGLPGTDPYFILFLMPTIPLTMNTRYLLAVTVGVPEEPKEGIAETSSKFFGSLTRYLRDYLEGKKRMALILTVKAGEEDYLDTSYLLRQASPYMKIKFDNTEEPCNKRQLKTFPRAEKNKKIKLSAPKTSQIEENFQGERCQISQEVNLQGKKADPTDRSSPRLEHVAQDKNEREHIIMRNFSKVLWNVLKQCNEKLKVAEGEIFTLKDSLRREQLKSLGLETELISLKSSCLAQPCIPEVEVIVNAKEHFEVDAALTNERNVDDDSCNLIKARREAGAEESSETPVPKVVRNVDDDSCNLIKARREAGAEESSESPVLSVLRNVDDDSCNLIEARREAGSEESSKSPVPNVRNVDVDSCNLINPRREASTEESSESPVLSKNVKDAELVPCHLSSENDAEPRQSVNSEENVGIPSTITHVEAEVTDFQRDQNQDDPTPSPEQVEVSQDCINSGLSNVQTKSAISRRFPDSEKQERNRRLLPASSRSLTEEMNDLEIKDIQTEKQQVKTTNTRVQKKAVSIQGQETEVPPREAEPASTKKQKNGQKPKRRLQPASSVLLTREINTLEIEDDIAEPKVNRGGKKTTVSQPRSQGSVTLLRLLTNNLHL</sequence>
<organism>
    <name type="scientific">Arabidopsis thaliana</name>
    <name type="common">Mouse-ear cress</name>
    <dbReference type="NCBI Taxonomy" id="3702"/>
    <lineage>
        <taxon>Eukaryota</taxon>
        <taxon>Viridiplantae</taxon>
        <taxon>Streptophyta</taxon>
        <taxon>Embryophyta</taxon>
        <taxon>Tracheophyta</taxon>
        <taxon>Spermatophyta</taxon>
        <taxon>Magnoliopsida</taxon>
        <taxon>eudicotyledons</taxon>
        <taxon>Gunneridae</taxon>
        <taxon>Pentapetalae</taxon>
        <taxon>rosids</taxon>
        <taxon>malvids</taxon>
        <taxon>Brassicales</taxon>
        <taxon>Brassicaceae</taxon>
        <taxon>Camelineae</taxon>
        <taxon>Arabidopsis</taxon>
    </lineage>
</organism>
<name>KN6_ARATH</name>
<feature type="chain" id="PRO_0000436274" description="Kinesin-like protein KIN-6">
    <location>
        <begin position="1"/>
        <end position="971"/>
    </location>
</feature>
<feature type="domain" description="Kinesin motor" evidence="1">
    <location>
        <begin position="76"/>
        <end position="460"/>
    </location>
</feature>
<feature type="region of interest" description="Disordered" evidence="2">
    <location>
        <begin position="1"/>
        <end position="44"/>
    </location>
</feature>
<feature type="region of interest" description="Disordered" evidence="2">
    <location>
        <begin position="93"/>
        <end position="121"/>
    </location>
</feature>
<feature type="region of interest" description="Disordered" evidence="2">
    <location>
        <begin position="700"/>
        <end position="856"/>
    </location>
</feature>
<feature type="region of interest" description="Disordered" evidence="2">
    <location>
        <begin position="872"/>
        <end position="917"/>
    </location>
</feature>
<feature type="compositionally biased region" description="Low complexity" evidence="2">
    <location>
        <begin position="29"/>
        <end position="39"/>
    </location>
</feature>
<feature type="compositionally biased region" description="Basic and acidic residues" evidence="2">
    <location>
        <begin position="700"/>
        <end position="709"/>
    </location>
</feature>
<feature type="compositionally biased region" description="Polar residues" evidence="2">
    <location>
        <begin position="768"/>
        <end position="783"/>
    </location>
</feature>
<feature type="compositionally biased region" description="Basic and acidic residues" evidence="2">
    <location>
        <begin position="785"/>
        <end position="797"/>
    </location>
</feature>
<feature type="compositionally biased region" description="Polar residues" evidence="2">
    <location>
        <begin position="809"/>
        <end position="827"/>
    </location>
</feature>
<feature type="compositionally biased region" description="Basic and acidic residues" evidence="2">
    <location>
        <begin position="831"/>
        <end position="842"/>
    </location>
</feature>
<feature type="compositionally biased region" description="Basic residues" evidence="2">
    <location>
        <begin position="903"/>
        <end position="915"/>
    </location>
</feature>
<feature type="binding site" evidence="1">
    <location>
        <begin position="202"/>
        <end position="209"/>
    </location>
    <ligand>
        <name>ATP</name>
        <dbReference type="ChEBI" id="CHEBI:30616"/>
    </ligand>
</feature>
<comment type="similarity">
    <text evidence="3">Belongs to the TRAFAC class myosin-kinesin ATPase superfamily. Kinesin family. KIN-6 subfamily.</text>
</comment>
<comment type="sequence caution" evidence="4">
    <conflict type="erroneous gene model prediction">
        <sequence resource="EMBL-CDS" id="AAF79908"/>
    </conflict>
</comment>
<comment type="sequence caution" evidence="4">
    <conflict type="erroneous gene model prediction">
        <sequence resource="EMBL-CDS" id="AEE29929"/>
    </conflict>
</comment>
<reference key="1">
    <citation type="journal article" date="2000" name="Nature">
        <title>Sequence and analysis of chromosome 1 of the plant Arabidopsis thaliana.</title>
        <authorList>
            <person name="Theologis A."/>
            <person name="Ecker J.R."/>
            <person name="Palm C.J."/>
            <person name="Federspiel N.A."/>
            <person name="Kaul S."/>
            <person name="White O."/>
            <person name="Alonso J."/>
            <person name="Altafi H."/>
            <person name="Araujo R."/>
            <person name="Bowman C.L."/>
            <person name="Brooks S.Y."/>
            <person name="Buehler E."/>
            <person name="Chan A."/>
            <person name="Chao Q."/>
            <person name="Chen H."/>
            <person name="Cheuk R.F."/>
            <person name="Chin C.W."/>
            <person name="Chung M.K."/>
            <person name="Conn L."/>
            <person name="Conway A.B."/>
            <person name="Conway A.R."/>
            <person name="Creasy T.H."/>
            <person name="Dewar K."/>
            <person name="Dunn P."/>
            <person name="Etgu P."/>
            <person name="Feldblyum T.V."/>
            <person name="Feng J.-D."/>
            <person name="Fong B."/>
            <person name="Fujii C.Y."/>
            <person name="Gill J.E."/>
            <person name="Goldsmith A.D."/>
            <person name="Haas B."/>
            <person name="Hansen N.F."/>
            <person name="Hughes B."/>
            <person name="Huizar L."/>
            <person name="Hunter J.L."/>
            <person name="Jenkins J."/>
            <person name="Johnson-Hopson C."/>
            <person name="Khan S."/>
            <person name="Khaykin E."/>
            <person name="Kim C.J."/>
            <person name="Koo H.L."/>
            <person name="Kremenetskaia I."/>
            <person name="Kurtz D.B."/>
            <person name="Kwan A."/>
            <person name="Lam B."/>
            <person name="Langin-Hooper S."/>
            <person name="Lee A."/>
            <person name="Lee J.M."/>
            <person name="Lenz C.A."/>
            <person name="Li J.H."/>
            <person name="Li Y.-P."/>
            <person name="Lin X."/>
            <person name="Liu S.X."/>
            <person name="Liu Z.A."/>
            <person name="Luros J.S."/>
            <person name="Maiti R."/>
            <person name="Marziali A."/>
            <person name="Militscher J."/>
            <person name="Miranda M."/>
            <person name="Nguyen M."/>
            <person name="Nierman W.C."/>
            <person name="Osborne B.I."/>
            <person name="Pai G."/>
            <person name="Peterson J."/>
            <person name="Pham P.K."/>
            <person name="Rizzo M."/>
            <person name="Rooney T."/>
            <person name="Rowley D."/>
            <person name="Sakano H."/>
            <person name="Salzberg S.L."/>
            <person name="Schwartz J.R."/>
            <person name="Shinn P."/>
            <person name="Southwick A.M."/>
            <person name="Sun H."/>
            <person name="Tallon L.J."/>
            <person name="Tambunga G."/>
            <person name="Toriumi M.J."/>
            <person name="Town C.D."/>
            <person name="Utterback T."/>
            <person name="Van Aken S."/>
            <person name="Vaysberg M."/>
            <person name="Vysotskaia V.S."/>
            <person name="Walker M."/>
            <person name="Wu D."/>
            <person name="Yu G."/>
            <person name="Fraser C.M."/>
            <person name="Venter J.C."/>
            <person name="Davis R.W."/>
        </authorList>
    </citation>
    <scope>NUCLEOTIDE SEQUENCE [LARGE SCALE GENOMIC DNA]</scope>
    <source>
        <strain>cv. Columbia</strain>
    </source>
</reference>
<reference key="2">
    <citation type="journal article" date="2017" name="Plant J.">
        <title>Araport11: a complete reannotation of the Arabidopsis thaliana reference genome.</title>
        <authorList>
            <person name="Cheng C.Y."/>
            <person name="Krishnakumar V."/>
            <person name="Chan A.P."/>
            <person name="Thibaud-Nissen F."/>
            <person name="Schobel S."/>
            <person name="Town C.D."/>
        </authorList>
    </citation>
    <scope>GENOME REANNOTATION</scope>
    <source>
        <strain>cv. Columbia</strain>
    </source>
</reference>
<reference key="3">
    <citation type="journal article" date="2001" name="BMC Genomics">
        <title>Kinesins in the Arabidopsis genome: a comparative analysis among eukaryotes.</title>
        <authorList>
            <person name="Reddy A.S."/>
            <person name="Day I.S."/>
        </authorList>
    </citation>
    <scope>GENE FAMILY</scope>
</reference>
<reference key="4">
    <citation type="journal article" date="2006" name="BMC Genomics">
        <title>Comprehensive comparative analysis of kinesins in photosynthetic eukaryotes.</title>
        <authorList>
            <person name="Richardson D.N."/>
            <person name="Simmons M.P."/>
            <person name="Reddy A.S."/>
        </authorList>
    </citation>
    <scope>GENE FAMILY</scope>
    <scope>NOMENCLATURE</scope>
</reference>
<reference key="5">
    <citation type="journal article" date="2012" name="Protoplasma">
        <title>Functions of the Arabidopsis kinesin superfamily of microtubule-based motor proteins.</title>
        <authorList>
            <person name="Zhu C."/>
            <person name="Dixit R."/>
        </authorList>
    </citation>
    <scope>REVIEW</scope>
</reference>
<dbReference type="EMBL" id="AC022472">
    <property type="protein sequence ID" value="AAF79908.1"/>
    <property type="status" value="ALT_SEQ"/>
    <property type="molecule type" value="Genomic_DNA"/>
</dbReference>
<dbReference type="EMBL" id="CP002684">
    <property type="protein sequence ID" value="AEE29929.1"/>
    <property type="status" value="ALT_SEQ"/>
    <property type="molecule type" value="Genomic_DNA"/>
</dbReference>
<dbReference type="PIR" id="A86334">
    <property type="entry name" value="A86334"/>
</dbReference>
<dbReference type="RefSeq" id="NP_173434.4">
    <property type="nucleotide sequence ID" value="NM_101860.4"/>
</dbReference>
<dbReference type="SMR" id="F4HR11"/>
<dbReference type="FunCoup" id="F4HR11">
    <property type="interactions" value="48"/>
</dbReference>
<dbReference type="STRING" id="3702.F4HR11"/>
<dbReference type="GlyGen" id="F4HR11">
    <property type="glycosylation" value="1 site"/>
</dbReference>
<dbReference type="PaxDb" id="3702-AT1G20060.1"/>
<dbReference type="PeptideAtlas" id="F4HR11"/>
<dbReference type="GeneID" id="838594"/>
<dbReference type="KEGG" id="ath:AT1G20060"/>
<dbReference type="Araport" id="AT1G20060"/>
<dbReference type="TAIR" id="AT1G20060"/>
<dbReference type="eggNOG" id="KOG0242">
    <property type="taxonomic scope" value="Eukaryota"/>
</dbReference>
<dbReference type="HOGENOM" id="CLU_001485_18_0_1"/>
<dbReference type="InParanoid" id="F4HR11"/>
<dbReference type="PRO" id="PR:F4HR11"/>
<dbReference type="Proteomes" id="UP000006548">
    <property type="component" value="Chromosome 1"/>
</dbReference>
<dbReference type="ExpressionAtlas" id="F4HR11">
    <property type="expression patterns" value="baseline and differential"/>
</dbReference>
<dbReference type="GO" id="GO:0005737">
    <property type="term" value="C:cytoplasm"/>
    <property type="evidence" value="ECO:0000318"/>
    <property type="project" value="GO_Central"/>
</dbReference>
<dbReference type="GO" id="GO:0005871">
    <property type="term" value="C:kinesin complex"/>
    <property type="evidence" value="ECO:0000318"/>
    <property type="project" value="GO_Central"/>
</dbReference>
<dbReference type="GO" id="GO:0005874">
    <property type="term" value="C:microtubule"/>
    <property type="evidence" value="ECO:0000318"/>
    <property type="project" value="GO_Central"/>
</dbReference>
<dbReference type="GO" id="GO:0005634">
    <property type="term" value="C:nucleus"/>
    <property type="evidence" value="ECO:0000318"/>
    <property type="project" value="GO_Central"/>
</dbReference>
<dbReference type="GO" id="GO:0005524">
    <property type="term" value="F:ATP binding"/>
    <property type="evidence" value="ECO:0007669"/>
    <property type="project" value="UniProtKB-KW"/>
</dbReference>
<dbReference type="GO" id="GO:0016887">
    <property type="term" value="F:ATP hydrolysis activity"/>
    <property type="evidence" value="ECO:0000318"/>
    <property type="project" value="GO_Central"/>
</dbReference>
<dbReference type="GO" id="GO:0008017">
    <property type="term" value="F:microtubule binding"/>
    <property type="evidence" value="ECO:0000318"/>
    <property type="project" value="GO_Central"/>
</dbReference>
<dbReference type="GO" id="GO:0003777">
    <property type="term" value="F:microtubule motor activity"/>
    <property type="evidence" value="ECO:0000318"/>
    <property type="project" value="GO_Central"/>
</dbReference>
<dbReference type="GO" id="GO:0007018">
    <property type="term" value="P:microtubule-based movement"/>
    <property type="evidence" value="ECO:0000318"/>
    <property type="project" value="GO_Central"/>
</dbReference>
<dbReference type="Gene3D" id="3.40.850.10">
    <property type="entry name" value="Kinesin motor domain"/>
    <property type="match status" value="1"/>
</dbReference>
<dbReference type="InterPro" id="IPR027640">
    <property type="entry name" value="Kinesin-like_fam"/>
</dbReference>
<dbReference type="InterPro" id="IPR019821">
    <property type="entry name" value="Kinesin_motor_CS"/>
</dbReference>
<dbReference type="InterPro" id="IPR001752">
    <property type="entry name" value="Kinesin_motor_dom"/>
</dbReference>
<dbReference type="InterPro" id="IPR036961">
    <property type="entry name" value="Kinesin_motor_dom_sf"/>
</dbReference>
<dbReference type="InterPro" id="IPR027417">
    <property type="entry name" value="P-loop_NTPase"/>
</dbReference>
<dbReference type="PANTHER" id="PTHR24115:SF1008">
    <property type="entry name" value="KINESIN-LIKE PROTEIN SUBITO"/>
    <property type="match status" value="1"/>
</dbReference>
<dbReference type="PANTHER" id="PTHR24115">
    <property type="entry name" value="KINESIN-RELATED"/>
    <property type="match status" value="1"/>
</dbReference>
<dbReference type="Pfam" id="PF00225">
    <property type="entry name" value="Kinesin"/>
    <property type="match status" value="1"/>
</dbReference>
<dbReference type="PRINTS" id="PR00380">
    <property type="entry name" value="KINESINHEAVY"/>
</dbReference>
<dbReference type="SMART" id="SM00129">
    <property type="entry name" value="KISc"/>
    <property type="match status" value="1"/>
</dbReference>
<dbReference type="SUPFAM" id="SSF52540">
    <property type="entry name" value="P-loop containing nucleoside triphosphate hydrolases"/>
    <property type="match status" value="1"/>
</dbReference>
<dbReference type="PROSITE" id="PS00411">
    <property type="entry name" value="KINESIN_MOTOR_1"/>
    <property type="match status" value="1"/>
</dbReference>
<dbReference type="PROSITE" id="PS50067">
    <property type="entry name" value="KINESIN_MOTOR_2"/>
    <property type="match status" value="1"/>
</dbReference>
<keyword id="KW-0067">ATP-binding</keyword>
<keyword id="KW-0493">Microtubule</keyword>
<keyword id="KW-0505">Motor protein</keyword>
<keyword id="KW-0547">Nucleotide-binding</keyword>
<keyword id="KW-1185">Reference proteome</keyword>
<accession>F4HR11</accession>
<accession>Q9LNT1</accession>
<proteinExistence type="inferred from homology"/>
<protein>
    <recommendedName>
        <fullName evidence="4">Kinesin-like protein KIN-6</fullName>
    </recommendedName>
</protein>
<gene>
    <name evidence="4" type="primary">KIN6</name>
    <name evidence="5" type="ordered locus">At1g20060</name>
    <name evidence="6" type="ORF">T20H2.17</name>
</gene>